<protein>
    <recommendedName>
        <fullName>Maintenance of telomere capping protein 6</fullName>
    </recommendedName>
</protein>
<dbReference type="EMBL" id="CR382128">
    <property type="protein sequence ID" value="CAG83261.1"/>
    <property type="molecule type" value="Genomic_DNA"/>
</dbReference>
<dbReference type="RefSeq" id="XP_501008.1">
    <property type="nucleotide sequence ID" value="XM_501008.1"/>
</dbReference>
<dbReference type="FunCoup" id="Q6CEA4">
    <property type="interactions" value="9"/>
</dbReference>
<dbReference type="STRING" id="284591.Q6CEA4"/>
<dbReference type="GlyCosmos" id="Q6CEA4">
    <property type="glycosylation" value="12 sites, No reported glycans"/>
</dbReference>
<dbReference type="EnsemblFungi" id="CAG83261">
    <property type="protein sequence ID" value="CAG83261"/>
    <property type="gene ID" value="YALI0_B17248g"/>
</dbReference>
<dbReference type="KEGG" id="yli:2906681"/>
<dbReference type="VEuPathDB" id="FungiDB:YALI0_B17248g"/>
<dbReference type="HOGENOM" id="CLU_033723_0_0_1"/>
<dbReference type="InParanoid" id="Q6CEA4"/>
<dbReference type="OMA" id="WGTIDPQ"/>
<dbReference type="OrthoDB" id="7147at4891"/>
<dbReference type="Proteomes" id="UP000001300">
    <property type="component" value="Chromosome B"/>
</dbReference>
<dbReference type="GO" id="GO:0016020">
    <property type="term" value="C:membrane"/>
    <property type="evidence" value="ECO:0007669"/>
    <property type="project" value="UniProtKB-SubCell"/>
</dbReference>
<dbReference type="InterPro" id="IPR051008">
    <property type="entry name" value="Telomere_Capping_Maintenance"/>
</dbReference>
<dbReference type="PANTHER" id="PTHR35518:SF2">
    <property type="entry name" value="MAINTENANCE OF TELOMERE CAPPING PROTEIN 6"/>
    <property type="match status" value="1"/>
</dbReference>
<dbReference type="PANTHER" id="PTHR35518">
    <property type="entry name" value="MAINTENANCE OF TELOMOERE CAPPING"/>
    <property type="match status" value="1"/>
</dbReference>
<dbReference type="Pfam" id="PF25506">
    <property type="entry name" value="TIM-barrel_MTC6"/>
    <property type="match status" value="1"/>
</dbReference>
<accession>Q6CEA4</accession>
<name>MTC6_YARLI</name>
<feature type="signal peptide" evidence="2">
    <location>
        <begin position="1"/>
        <end position="22"/>
    </location>
</feature>
<feature type="chain" id="PRO_0000407784" description="Maintenance of telomere capping protein 6">
    <location>
        <begin position="23"/>
        <end position="685"/>
    </location>
</feature>
<feature type="topological domain" description="Extracellular" evidence="2">
    <location>
        <begin position="23"/>
        <end position="633"/>
    </location>
</feature>
<feature type="transmembrane region" description="Helical" evidence="2">
    <location>
        <begin position="634"/>
        <end position="654"/>
    </location>
</feature>
<feature type="topological domain" description="Cytoplasmic" evidence="2">
    <location>
        <begin position="655"/>
        <end position="685"/>
    </location>
</feature>
<feature type="region of interest" description="Disordered" evidence="3">
    <location>
        <begin position="201"/>
        <end position="221"/>
    </location>
</feature>
<feature type="region of interest" description="Disordered" evidence="3">
    <location>
        <begin position="238"/>
        <end position="295"/>
    </location>
</feature>
<feature type="region of interest" description="Disordered" evidence="3">
    <location>
        <begin position="309"/>
        <end position="328"/>
    </location>
</feature>
<feature type="compositionally biased region" description="Low complexity" evidence="3">
    <location>
        <begin position="244"/>
        <end position="290"/>
    </location>
</feature>
<feature type="compositionally biased region" description="Basic and acidic residues" evidence="3">
    <location>
        <begin position="310"/>
        <end position="324"/>
    </location>
</feature>
<feature type="glycosylation site" description="N-linked (GlcNAc...) asparagine" evidence="2">
    <location>
        <position position="75"/>
    </location>
</feature>
<feature type="glycosylation site" description="N-linked (GlcNAc...) asparagine" evidence="2">
    <location>
        <position position="163"/>
    </location>
</feature>
<feature type="glycosylation site" description="N-linked (GlcNAc...) asparagine" evidence="2">
    <location>
        <position position="178"/>
    </location>
</feature>
<feature type="glycosylation site" description="N-linked (GlcNAc...) asparagine" evidence="2">
    <location>
        <position position="205"/>
    </location>
</feature>
<feature type="glycosylation site" description="N-linked (GlcNAc...) asparagine" evidence="2">
    <location>
        <position position="235"/>
    </location>
</feature>
<feature type="glycosylation site" description="N-linked (GlcNAc...) asparagine" evidence="2">
    <location>
        <position position="254"/>
    </location>
</feature>
<feature type="glycosylation site" description="N-linked (GlcNAc...) asparagine" evidence="2">
    <location>
        <position position="258"/>
    </location>
</feature>
<feature type="glycosylation site" description="N-linked (GlcNAc...) asparagine" evidence="2">
    <location>
        <position position="264"/>
    </location>
</feature>
<feature type="glycosylation site" description="N-linked (GlcNAc...) asparagine" evidence="2">
    <location>
        <position position="412"/>
    </location>
</feature>
<feature type="glycosylation site" description="N-linked (GlcNAc...) asparagine" evidence="2">
    <location>
        <position position="432"/>
    </location>
</feature>
<feature type="glycosylation site" description="N-linked (GlcNAc...) asparagine" evidence="2">
    <location>
        <position position="448"/>
    </location>
</feature>
<feature type="glycosylation site" description="N-linked (GlcNAc...) asparagine" evidence="2">
    <location>
        <position position="478"/>
    </location>
</feature>
<proteinExistence type="inferred from homology"/>
<sequence>MVWLWTLPWTFILVALIPLATAKSPDVHHSLQQLKKRDDDSLRDENCQAWIAPVWPGMSHMMVAATRAERDVSYNVSIDQLTYKGAELTPLVFNKYGYTQDGIFKSMDLLKSGMTSLGLDVYWNNKEQYWQLCPVIFPSSAEPGTPVLLQRRLTTDIVTCDQNATLSYFLAALSNHVNVTDNNLDVDLISLKLNLRTVETPIQSNSSSQRQKRQFRETSTSVTQLASSVLSSLLNASKTTRMESTGSFSNSDSNSSSNSSRMSNSTESTRTTSSTESASSTSTTPSTYTTGPQMLGNIVGSSYIGPRLYTPKDLHRDREAEPPRTYDYQGLSNRGFPLAHYILLEMKARVMVSISQNDQPDGYGWGSADQDVIFTKQALLGSSDPENTNENIAYENLQECIRLDPQFLQSINLTGAASWRTYSSTQQDPISNVSFQEFINCGLSPSINNTLAPGETLQGLMTESLWSWAEDEPSKCHNESVTRTQDRNTGLVAWNCAVLMPDGWHVANCYDTHYPLCRQGELAYNWAVGTQKVNYFDTAQEKNICPPGYTFSLPRTALQNIAAKITVRGVSGKTRVYKGGDTTDPDSYDTIDYGNTAFPVWIDLNSISQEDCWVSGGPTARCPYRTVQSHSVSVALLTVASAVCAGVAAAIILLQMDTQPIKKNSGRWRRLMSNFKKSEYESVPA</sequence>
<comment type="function">
    <text evidence="1">May be involved in telomere capping.</text>
</comment>
<comment type="subcellular location">
    <subcellularLocation>
        <location evidence="4">Membrane</location>
        <topology evidence="4">Single-pass type I membrane protein</topology>
    </subcellularLocation>
</comment>
<comment type="similarity">
    <text evidence="4">Belongs to the MTC6 family.</text>
</comment>
<keyword id="KW-0325">Glycoprotein</keyword>
<keyword id="KW-0472">Membrane</keyword>
<keyword id="KW-1185">Reference proteome</keyword>
<keyword id="KW-0732">Signal</keyword>
<keyword id="KW-0812">Transmembrane</keyword>
<keyword id="KW-1133">Transmembrane helix</keyword>
<organism>
    <name type="scientific">Yarrowia lipolytica (strain CLIB 122 / E 150)</name>
    <name type="common">Yeast</name>
    <name type="synonym">Candida lipolytica</name>
    <dbReference type="NCBI Taxonomy" id="284591"/>
    <lineage>
        <taxon>Eukaryota</taxon>
        <taxon>Fungi</taxon>
        <taxon>Dikarya</taxon>
        <taxon>Ascomycota</taxon>
        <taxon>Saccharomycotina</taxon>
        <taxon>Dipodascomycetes</taxon>
        <taxon>Dipodascales</taxon>
        <taxon>Dipodascales incertae sedis</taxon>
        <taxon>Yarrowia</taxon>
    </lineage>
</organism>
<reference key="1">
    <citation type="journal article" date="2004" name="Nature">
        <title>Genome evolution in yeasts.</title>
        <authorList>
            <person name="Dujon B."/>
            <person name="Sherman D."/>
            <person name="Fischer G."/>
            <person name="Durrens P."/>
            <person name="Casaregola S."/>
            <person name="Lafontaine I."/>
            <person name="de Montigny J."/>
            <person name="Marck C."/>
            <person name="Neuveglise C."/>
            <person name="Talla E."/>
            <person name="Goffard N."/>
            <person name="Frangeul L."/>
            <person name="Aigle M."/>
            <person name="Anthouard V."/>
            <person name="Babour A."/>
            <person name="Barbe V."/>
            <person name="Barnay S."/>
            <person name="Blanchin S."/>
            <person name="Beckerich J.-M."/>
            <person name="Beyne E."/>
            <person name="Bleykasten C."/>
            <person name="Boisrame A."/>
            <person name="Boyer J."/>
            <person name="Cattolico L."/>
            <person name="Confanioleri F."/>
            <person name="de Daruvar A."/>
            <person name="Despons L."/>
            <person name="Fabre E."/>
            <person name="Fairhead C."/>
            <person name="Ferry-Dumazet H."/>
            <person name="Groppi A."/>
            <person name="Hantraye F."/>
            <person name="Hennequin C."/>
            <person name="Jauniaux N."/>
            <person name="Joyet P."/>
            <person name="Kachouri R."/>
            <person name="Kerrest A."/>
            <person name="Koszul R."/>
            <person name="Lemaire M."/>
            <person name="Lesur I."/>
            <person name="Ma L."/>
            <person name="Muller H."/>
            <person name="Nicaud J.-M."/>
            <person name="Nikolski M."/>
            <person name="Oztas S."/>
            <person name="Ozier-Kalogeropoulos O."/>
            <person name="Pellenz S."/>
            <person name="Potier S."/>
            <person name="Richard G.-F."/>
            <person name="Straub M.-L."/>
            <person name="Suleau A."/>
            <person name="Swennen D."/>
            <person name="Tekaia F."/>
            <person name="Wesolowski-Louvel M."/>
            <person name="Westhof E."/>
            <person name="Wirth B."/>
            <person name="Zeniou-Meyer M."/>
            <person name="Zivanovic Y."/>
            <person name="Bolotin-Fukuhara M."/>
            <person name="Thierry A."/>
            <person name="Bouchier C."/>
            <person name="Caudron B."/>
            <person name="Scarpelli C."/>
            <person name="Gaillardin C."/>
            <person name="Weissenbach J."/>
            <person name="Wincker P."/>
            <person name="Souciet J.-L."/>
        </authorList>
    </citation>
    <scope>NUCLEOTIDE SEQUENCE [LARGE SCALE GENOMIC DNA]</scope>
    <source>
        <strain>CLIB 122 / E 150</strain>
    </source>
</reference>
<gene>
    <name type="primary">MTC6</name>
    <name type="ordered locus">YALI0B17248g</name>
</gene>
<evidence type="ECO:0000250" key="1"/>
<evidence type="ECO:0000255" key="2"/>
<evidence type="ECO:0000256" key="3">
    <source>
        <dbReference type="SAM" id="MobiDB-lite"/>
    </source>
</evidence>
<evidence type="ECO:0000305" key="4"/>